<protein>
    <recommendedName>
        <fullName>Mediator of RNA polymerase II transcription subunit 1</fullName>
    </recommendedName>
    <alternativeName>
        <fullName>Mediator complex subunit 1</fullName>
    </alternativeName>
</protein>
<proteinExistence type="evidence at protein level"/>
<sequence>MSSLLERLHSKYSQNRPWPETIKLVRQIMEKRTGMMSGSHQHLVSCLETLQKALKVSSLSAMTDRLESIARQNGLTSHLSPNGTECYITTDMFYLEVLLDTEGQLCDVKVAHHRENPVSCPELVEQLREKNFEDFSQHLKGLVNLYKVPGDNKLETKMYLALQSLELDLTKMAAMYWQATNASVLEKILHGTVGYLTPRSGGQVMSLKYYVSPYDLFDDTTGASISLSEGHAVPRSLGMNVSVTIEATSAMYKLPIAPLIMGSHPIDNKGTPSFTSITNANSVDLPACFFLKFPQPIPVSRAFIQKIQHCTGIPLIDGSHTFLPHYELVTQFELAKEKEPGTLNHNMRFYASLPGQQHCYFVNKDAPLPDGRSLQGTLLSKIPFQHPGRVPIILSLIRHQVACNTLIGSCVKRTMLKEDCPGLLQFEVAPLSDSCFSISFQHPVNDSLVCVVMDVQDSSHVSCKLYKGLSDALICTDDFITKVVQRCMSIPVTMRAIRRKAETIQADTPALSLIAETVEDMVKKNLPPASSPGYGMASGSTALSGITTPTSSYTSGQISSLFNMGIKERHDSAGHGDDFSKVTQNPILTSLLQITSNSGGTLGSSPTPPQHTPPPASSPASNTKNHPMLMNLLKDNPAQDFSTLYGGSPLERQNSSGSPRTELGSSASGKPKKKRPRTGTEKMKNQTEDDFQRELFSMDVDSQNTIFDVGMAGDALDTPHITPAPSQCGTPPNVYQQAIPHTQANMQRMVRIPSTDAIIPDVTDILSDIAEEASKLPGPGEDCPNLGTPVRDSSSSGHSQSTLFDTDVFQVDGGGGSGGENPYPDPVDLIVDSHGSPNSDSPNTFFNSVDFNPDLLNSQSQSGFTDDLNDDSSQSGDNDFKDFAGPGLASLGIVSGLPVDGGDGKYKMALGADTVDFSIIAGGGSKNLGGPDIQETQSRSQSPLLGSDLGKDRPQKQKVKESGNGGGAGGGLSGMQSAGMEGKSMKRSRTPSSDGKSKDKPPKRKKTESDGKSPSHITNRPFTPPTSTGGSKSPGTSGRSQTPPGMATPPIPKITIQIPKGTMSVGKPSSHSQYSSSGSSSSSSSKSHHGHSSLSSSASGKIKSNKSDGSSGMKIGSSGGGMYSGQSGQSNSQSKNSSQSMGKAGSSPITKHGLSSNVNNSSGSKTKPQGKPSVLMNPSLSKPNISPSHSRPSGGSDKLSSPMKPMPGTPPSSKAKSPIGSGGQHLSGSGSNSTTKSSSGLVSSGSLTQKPNSSSSSSSSSSSSSSSSSSSSSSFSSGVSQNLHSSSKGKSPSRNKKPSLTAVIDKLKHGVGTGGPGSEDPMDGGVGGGSTGAPSHGMSSKHGLGVGEFPTKREKGEKDKSKGSSGGPSDPSKKGGGDSKGSVSTGVAKIIISKHDGGSPSIKAKVTLQKPEGGGEGLRSQMQKNYGSPLISGSTPKHERCSPSHNKSPAYTPQALDSESESGSSSIAEKSYQNSPSSDDGGGSGSRAQTEYSAEKHKKHKKEKKRLKDKDRDREKKKSYTMKPESWSKSPISADPTMAMGGGAMMSSDRASRPTPSFLMGDDDDLIDVPLTL</sequence>
<reference key="1">
    <citation type="submission" date="2006-11" db="EMBL/GenBank/DDBJ databases">
        <authorList>
            <consortium name="NIH - Xenopus Gene Collection (XGC) project"/>
        </authorList>
    </citation>
    <scope>NUCLEOTIDE SEQUENCE [LARGE SCALE MRNA]</scope>
    <source>
        <tissue>Testis</tissue>
    </source>
</reference>
<comment type="function">
    <text evidence="1">Component of the Mediator complex, a coactivator involved in the regulated transcription of nearly all RNA polymerase II-dependent genes. Mediator functions as a bridge to convey information from gene-specific regulatory proteins to the basal RNA polymerase II transcription machinery. Mediator is recruited to promoters by direct interactions with regulatory proteins and serves as a scaffold for the assembly of a functional preinitiation complex with RNA polymerase II and the general transcription factors (By similarity).</text>
</comment>
<comment type="subunit">
    <text evidence="1">Component of the Mediator complex.</text>
</comment>
<comment type="subcellular location">
    <subcellularLocation>
        <location evidence="1">Nucleus</location>
    </subcellularLocation>
</comment>
<comment type="similarity">
    <text evidence="3">Belongs to the Mediator complex subunit 1 family.</text>
</comment>
<gene>
    <name type="primary">med1</name>
</gene>
<accession>A1L0Z0</accession>
<organism>
    <name type="scientific">Xenopus tropicalis</name>
    <name type="common">Western clawed frog</name>
    <name type="synonym">Silurana tropicalis</name>
    <dbReference type="NCBI Taxonomy" id="8364"/>
    <lineage>
        <taxon>Eukaryota</taxon>
        <taxon>Metazoa</taxon>
        <taxon>Chordata</taxon>
        <taxon>Craniata</taxon>
        <taxon>Vertebrata</taxon>
        <taxon>Euteleostomi</taxon>
        <taxon>Amphibia</taxon>
        <taxon>Batrachia</taxon>
        <taxon>Anura</taxon>
        <taxon>Pipoidea</taxon>
        <taxon>Pipidae</taxon>
        <taxon>Xenopodinae</taxon>
        <taxon>Xenopus</taxon>
        <taxon>Silurana</taxon>
    </lineage>
</organism>
<evidence type="ECO:0000250" key="1">
    <source>
        <dbReference type="UniProtKB" id="Q15648"/>
    </source>
</evidence>
<evidence type="ECO:0000256" key="2">
    <source>
        <dbReference type="SAM" id="MobiDB-lite"/>
    </source>
</evidence>
<evidence type="ECO:0000305" key="3"/>
<evidence type="ECO:0007829" key="4">
    <source>
        <dbReference type="PDB" id="2ZMI"/>
    </source>
</evidence>
<dbReference type="EMBL" id="BC127309">
    <property type="protein sequence ID" value="AAI27310.1"/>
    <property type="molecule type" value="mRNA"/>
</dbReference>
<dbReference type="RefSeq" id="NP_001090727.1">
    <property type="nucleotide sequence ID" value="NM_001097258.1"/>
</dbReference>
<dbReference type="PDB" id="2ZMH">
    <property type="method" value="X-ray"/>
    <property type="resolution" value="2.10 A"/>
    <property type="chains" value="C=624-636"/>
</dbReference>
<dbReference type="PDB" id="2ZMI">
    <property type="method" value="X-ray"/>
    <property type="resolution" value="1.70 A"/>
    <property type="chains" value="C=624-636"/>
</dbReference>
<dbReference type="PDB" id="2ZMJ">
    <property type="method" value="X-ray"/>
    <property type="resolution" value="2.35 A"/>
    <property type="chains" value="C=624-636"/>
</dbReference>
<dbReference type="PDB" id="2ZXM">
    <property type="method" value="X-ray"/>
    <property type="resolution" value="3.01 A"/>
    <property type="chains" value="C=624-636"/>
</dbReference>
<dbReference type="PDB" id="2ZXN">
    <property type="method" value="X-ray"/>
    <property type="resolution" value="2.10 A"/>
    <property type="chains" value="C=624-636"/>
</dbReference>
<dbReference type="PDB" id="3AFR">
    <property type="method" value="X-ray"/>
    <property type="resolution" value="2.00 A"/>
    <property type="chains" value="C=624-636"/>
</dbReference>
<dbReference type="PDBsum" id="2ZMH"/>
<dbReference type="PDBsum" id="2ZMI"/>
<dbReference type="PDBsum" id="2ZMJ"/>
<dbReference type="PDBsum" id="2ZXM"/>
<dbReference type="PDBsum" id="2ZXN"/>
<dbReference type="PDBsum" id="3AFR"/>
<dbReference type="SMR" id="A1L0Z0"/>
<dbReference type="FunCoup" id="A1L0Z0">
    <property type="interactions" value="3992"/>
</dbReference>
<dbReference type="STRING" id="8364.ENSXETP00000046949"/>
<dbReference type="PaxDb" id="8364-ENSXETP00000051133"/>
<dbReference type="GeneID" id="100036710"/>
<dbReference type="KEGG" id="xtr:100036710"/>
<dbReference type="CTD" id="5469"/>
<dbReference type="eggNOG" id="ENOG502QPZ7">
    <property type="taxonomic scope" value="Eukaryota"/>
</dbReference>
<dbReference type="InParanoid" id="A1L0Z0"/>
<dbReference type="OMA" id="NMKERHE"/>
<dbReference type="OrthoDB" id="2281547at2759"/>
<dbReference type="EvolutionaryTrace" id="A1L0Z0"/>
<dbReference type="Proteomes" id="UP000008143">
    <property type="component" value="Chromosome 10"/>
</dbReference>
<dbReference type="GO" id="GO:0016592">
    <property type="term" value="C:mediator complex"/>
    <property type="evidence" value="ECO:0007669"/>
    <property type="project" value="InterPro"/>
</dbReference>
<dbReference type="GO" id="GO:0003712">
    <property type="term" value="F:transcription coregulator activity"/>
    <property type="evidence" value="ECO:0007669"/>
    <property type="project" value="InterPro"/>
</dbReference>
<dbReference type="GO" id="GO:0045944">
    <property type="term" value="P:positive regulation of transcription by RNA polymerase II"/>
    <property type="evidence" value="ECO:0007669"/>
    <property type="project" value="UniProtKB-ARBA"/>
</dbReference>
<dbReference type="IDEAL" id="IID50031"/>
<dbReference type="InterPro" id="IPR051999">
    <property type="entry name" value="Mediator_complex_subunit_1"/>
</dbReference>
<dbReference type="InterPro" id="IPR019680">
    <property type="entry name" value="Mediator_Med1"/>
</dbReference>
<dbReference type="PANTHER" id="PTHR12881">
    <property type="entry name" value="MEDIATOR OF RNA POLYMERASE II TRANSCRIPTION SUBUNIT 1"/>
    <property type="match status" value="1"/>
</dbReference>
<dbReference type="PANTHER" id="PTHR12881:SF14">
    <property type="entry name" value="MEDIATOR OF RNA POLYMERASE II TRANSCRIPTION SUBUNIT 1"/>
    <property type="match status" value="1"/>
</dbReference>
<dbReference type="Pfam" id="PF10744">
    <property type="entry name" value="Med1"/>
    <property type="match status" value="1"/>
</dbReference>
<name>MED1_XENTR</name>
<keyword id="KW-0002">3D-structure</keyword>
<keyword id="KW-0010">Activator</keyword>
<keyword id="KW-0539">Nucleus</keyword>
<keyword id="KW-1185">Reference proteome</keyword>
<keyword id="KW-0804">Transcription</keyword>
<keyword id="KW-0805">Transcription regulation</keyword>
<feature type="chain" id="PRO_0000302021" description="Mediator of RNA polymerase II transcription subunit 1">
    <location>
        <begin position="1"/>
        <end position="1573"/>
    </location>
</feature>
<feature type="region of interest" description="Disordered" evidence="2">
    <location>
        <begin position="595"/>
        <end position="691"/>
    </location>
</feature>
<feature type="region of interest" description="Disordered" evidence="2">
    <location>
        <begin position="774"/>
        <end position="883"/>
    </location>
</feature>
<feature type="region of interest" description="Disordered" evidence="2">
    <location>
        <begin position="928"/>
        <end position="1564"/>
    </location>
</feature>
<feature type="short sequence motif" description="LXXLL motif 1">
    <location>
        <begin position="588"/>
        <end position="592"/>
    </location>
</feature>
<feature type="short sequence motif" description="LXXLL motif 2">
    <location>
        <begin position="629"/>
        <end position="633"/>
    </location>
</feature>
<feature type="compositionally biased region" description="Pro residues" evidence="2">
    <location>
        <begin position="606"/>
        <end position="617"/>
    </location>
</feature>
<feature type="compositionally biased region" description="Polar residues" evidence="2">
    <location>
        <begin position="651"/>
        <end position="668"/>
    </location>
</feature>
<feature type="compositionally biased region" description="Basic and acidic residues" evidence="2">
    <location>
        <begin position="678"/>
        <end position="691"/>
    </location>
</feature>
<feature type="compositionally biased region" description="Polar residues" evidence="2">
    <location>
        <begin position="791"/>
        <end position="804"/>
    </location>
</feature>
<feature type="compositionally biased region" description="Polar residues" evidence="2">
    <location>
        <begin position="835"/>
        <end position="864"/>
    </location>
</feature>
<feature type="compositionally biased region" description="Polar residues" evidence="2">
    <location>
        <begin position="934"/>
        <end position="944"/>
    </location>
</feature>
<feature type="compositionally biased region" description="Basic and acidic residues" evidence="2">
    <location>
        <begin position="949"/>
        <end position="961"/>
    </location>
</feature>
<feature type="compositionally biased region" description="Gly residues" evidence="2">
    <location>
        <begin position="963"/>
        <end position="973"/>
    </location>
</feature>
<feature type="compositionally biased region" description="Low complexity" evidence="2">
    <location>
        <begin position="1025"/>
        <end position="1038"/>
    </location>
</feature>
<feature type="compositionally biased region" description="Low complexity" evidence="2">
    <location>
        <begin position="1053"/>
        <end position="1085"/>
    </location>
</feature>
<feature type="compositionally biased region" description="Low complexity" evidence="2">
    <location>
        <begin position="1092"/>
        <end position="1116"/>
    </location>
</feature>
<feature type="compositionally biased region" description="Low complexity" evidence="2">
    <location>
        <begin position="1124"/>
        <end position="1143"/>
    </location>
</feature>
<feature type="compositionally biased region" description="Low complexity" evidence="2">
    <location>
        <begin position="1155"/>
        <end position="1164"/>
    </location>
</feature>
<feature type="compositionally biased region" description="Polar residues" evidence="2">
    <location>
        <begin position="1176"/>
        <end position="1193"/>
    </location>
</feature>
<feature type="compositionally biased region" description="Low complexity" evidence="2">
    <location>
        <begin position="1226"/>
        <end position="1277"/>
    </location>
</feature>
<feature type="compositionally biased region" description="Polar residues" evidence="2">
    <location>
        <begin position="1278"/>
        <end position="1290"/>
    </location>
</feature>
<feature type="compositionally biased region" description="Basic and acidic residues" evidence="2">
    <location>
        <begin position="1350"/>
        <end position="1362"/>
    </location>
</feature>
<feature type="compositionally biased region" description="Polar residues" evidence="2">
    <location>
        <begin position="1420"/>
        <end position="1435"/>
    </location>
</feature>
<feature type="compositionally biased region" description="Polar residues" evidence="2">
    <location>
        <begin position="1443"/>
        <end position="1457"/>
    </location>
</feature>
<feature type="compositionally biased region" description="Low complexity" evidence="2">
    <location>
        <begin position="1461"/>
        <end position="1471"/>
    </location>
</feature>
<feature type="compositionally biased region" description="Basic residues" evidence="2">
    <location>
        <begin position="1496"/>
        <end position="1505"/>
    </location>
</feature>
<feature type="compositionally biased region" description="Basic and acidic residues" evidence="2">
    <location>
        <begin position="1506"/>
        <end position="1518"/>
    </location>
</feature>
<feature type="helix" evidence="4">
    <location>
        <begin position="627"/>
        <end position="633"/>
    </location>
</feature>